<feature type="chain" id="PRO_0000203871" description="Phosphoenolpyruvate carboxykinase (ATP)">
    <location>
        <begin position="1"/>
        <end position="544"/>
    </location>
</feature>
<feature type="binding site" evidence="1">
    <location>
        <begin position="246"/>
        <end position="253"/>
    </location>
    <ligand>
        <name>ATP</name>
        <dbReference type="ChEBI" id="CHEBI:30616"/>
    </ligand>
</feature>
<reference key="1">
    <citation type="journal article" date="2004" name="Nature">
        <title>Genome evolution in yeasts.</title>
        <authorList>
            <person name="Dujon B."/>
            <person name="Sherman D."/>
            <person name="Fischer G."/>
            <person name="Durrens P."/>
            <person name="Casaregola S."/>
            <person name="Lafontaine I."/>
            <person name="de Montigny J."/>
            <person name="Marck C."/>
            <person name="Neuveglise C."/>
            <person name="Talla E."/>
            <person name="Goffard N."/>
            <person name="Frangeul L."/>
            <person name="Aigle M."/>
            <person name="Anthouard V."/>
            <person name="Babour A."/>
            <person name="Barbe V."/>
            <person name="Barnay S."/>
            <person name="Blanchin S."/>
            <person name="Beckerich J.-M."/>
            <person name="Beyne E."/>
            <person name="Bleykasten C."/>
            <person name="Boisrame A."/>
            <person name="Boyer J."/>
            <person name="Cattolico L."/>
            <person name="Confanioleri F."/>
            <person name="de Daruvar A."/>
            <person name="Despons L."/>
            <person name="Fabre E."/>
            <person name="Fairhead C."/>
            <person name="Ferry-Dumazet H."/>
            <person name="Groppi A."/>
            <person name="Hantraye F."/>
            <person name="Hennequin C."/>
            <person name="Jauniaux N."/>
            <person name="Joyet P."/>
            <person name="Kachouri R."/>
            <person name="Kerrest A."/>
            <person name="Koszul R."/>
            <person name="Lemaire M."/>
            <person name="Lesur I."/>
            <person name="Ma L."/>
            <person name="Muller H."/>
            <person name="Nicaud J.-M."/>
            <person name="Nikolski M."/>
            <person name="Oztas S."/>
            <person name="Ozier-Kalogeropoulos O."/>
            <person name="Pellenz S."/>
            <person name="Potier S."/>
            <person name="Richard G.-F."/>
            <person name="Straub M.-L."/>
            <person name="Suleau A."/>
            <person name="Swennen D."/>
            <person name="Tekaia F."/>
            <person name="Wesolowski-Louvel M."/>
            <person name="Westhof E."/>
            <person name="Wirth B."/>
            <person name="Zeniou-Meyer M."/>
            <person name="Zivanovic Y."/>
            <person name="Bolotin-Fukuhara M."/>
            <person name="Thierry A."/>
            <person name="Bouchier C."/>
            <person name="Caudron B."/>
            <person name="Scarpelli C."/>
            <person name="Gaillardin C."/>
            <person name="Weissenbach J."/>
            <person name="Wincker P."/>
            <person name="Souciet J.-L."/>
        </authorList>
    </citation>
    <scope>NUCLEOTIDE SEQUENCE [LARGE SCALE GENOMIC DNA]</scope>
    <source>
        <strain>ATCC 2001 / BCRC 20586 / JCM 3761 / NBRC 0622 / NRRL Y-65 / CBS 138</strain>
    </source>
</reference>
<evidence type="ECO:0000255" key="1"/>
<evidence type="ECO:0000305" key="2"/>
<dbReference type="EC" id="4.1.1.49"/>
<dbReference type="EMBL" id="CR380954">
    <property type="protein sequence ID" value="CAG60017.1"/>
    <property type="molecule type" value="Genomic_DNA"/>
</dbReference>
<dbReference type="RefSeq" id="XP_447084.1">
    <property type="nucleotide sequence ID" value="XM_447084.1"/>
</dbReference>
<dbReference type="SMR" id="Q6FRR0"/>
<dbReference type="FunCoup" id="Q6FRR0">
    <property type="interactions" value="323"/>
</dbReference>
<dbReference type="STRING" id="284593.Q6FRR0"/>
<dbReference type="EnsemblFungi" id="CAGL0H06633g-T">
    <property type="protein sequence ID" value="CAGL0H06633g-T-p1"/>
    <property type="gene ID" value="CAGL0H06633g"/>
</dbReference>
<dbReference type="KEGG" id="cgr:2888554"/>
<dbReference type="CGD" id="CAL0129906">
    <property type="gene designation" value="PCK1"/>
</dbReference>
<dbReference type="VEuPathDB" id="FungiDB:B1J91_H06633g"/>
<dbReference type="VEuPathDB" id="FungiDB:CAGL0H06633g"/>
<dbReference type="eggNOG" id="ENOG502QQI5">
    <property type="taxonomic scope" value="Eukaryota"/>
</dbReference>
<dbReference type="HOGENOM" id="CLU_018247_0_1_1"/>
<dbReference type="InParanoid" id="Q6FRR0"/>
<dbReference type="OMA" id="MRYAGEM"/>
<dbReference type="UniPathway" id="UPA00138"/>
<dbReference type="Proteomes" id="UP000002428">
    <property type="component" value="Chromosome H"/>
</dbReference>
<dbReference type="GO" id="GO:0009986">
    <property type="term" value="C:cell surface"/>
    <property type="evidence" value="ECO:0000314"/>
    <property type="project" value="CGD"/>
</dbReference>
<dbReference type="GO" id="GO:0005829">
    <property type="term" value="C:cytosol"/>
    <property type="evidence" value="ECO:0007669"/>
    <property type="project" value="EnsemblFungi"/>
</dbReference>
<dbReference type="GO" id="GO:0005524">
    <property type="term" value="F:ATP binding"/>
    <property type="evidence" value="ECO:0007669"/>
    <property type="project" value="UniProtKB-KW"/>
</dbReference>
<dbReference type="GO" id="GO:0004612">
    <property type="term" value="F:phosphoenolpyruvate carboxykinase (ATP) activity"/>
    <property type="evidence" value="ECO:0007669"/>
    <property type="project" value="UniProtKB-EC"/>
</dbReference>
<dbReference type="GO" id="GO:0015976">
    <property type="term" value="P:carbon utilization"/>
    <property type="evidence" value="ECO:0000315"/>
    <property type="project" value="CGD"/>
</dbReference>
<dbReference type="GO" id="GO:0006094">
    <property type="term" value="P:gluconeogenesis"/>
    <property type="evidence" value="ECO:0007669"/>
    <property type="project" value="UniProtKB-UniPathway"/>
</dbReference>
<dbReference type="CDD" id="cd00484">
    <property type="entry name" value="PEPCK_ATP"/>
    <property type="match status" value="1"/>
</dbReference>
<dbReference type="FunFam" id="2.170.8.10:FF:000001">
    <property type="entry name" value="Phosphoenolpyruvate carboxykinase (ATP)"/>
    <property type="match status" value="1"/>
</dbReference>
<dbReference type="FunFam" id="3.40.449.10:FF:000002">
    <property type="entry name" value="Phosphoenolpyruvate carboxykinase [ATP]"/>
    <property type="match status" value="1"/>
</dbReference>
<dbReference type="Gene3D" id="3.90.228.20">
    <property type="match status" value="1"/>
</dbReference>
<dbReference type="Gene3D" id="3.40.449.10">
    <property type="entry name" value="Phosphoenolpyruvate Carboxykinase, domain 1"/>
    <property type="match status" value="1"/>
</dbReference>
<dbReference type="Gene3D" id="2.170.8.10">
    <property type="entry name" value="Phosphoenolpyruvate Carboxykinase, domain 2"/>
    <property type="match status" value="1"/>
</dbReference>
<dbReference type="HAMAP" id="MF_00453">
    <property type="entry name" value="PEPCK_ATP"/>
    <property type="match status" value="1"/>
</dbReference>
<dbReference type="InterPro" id="IPR001272">
    <property type="entry name" value="PEP_carboxykinase_ATP"/>
</dbReference>
<dbReference type="InterPro" id="IPR013035">
    <property type="entry name" value="PEP_carboxykinase_C"/>
</dbReference>
<dbReference type="InterPro" id="IPR008210">
    <property type="entry name" value="PEP_carboxykinase_N"/>
</dbReference>
<dbReference type="InterPro" id="IPR015994">
    <property type="entry name" value="PEPCK_ATP_CS"/>
</dbReference>
<dbReference type="NCBIfam" id="TIGR00224">
    <property type="entry name" value="pckA"/>
    <property type="match status" value="1"/>
</dbReference>
<dbReference type="NCBIfam" id="NF006820">
    <property type="entry name" value="PRK09344.1-2"/>
    <property type="match status" value="1"/>
</dbReference>
<dbReference type="NCBIfam" id="NF006821">
    <property type="entry name" value="PRK09344.1-3"/>
    <property type="match status" value="1"/>
</dbReference>
<dbReference type="PANTHER" id="PTHR30031:SF0">
    <property type="entry name" value="PHOSPHOENOLPYRUVATE CARBOXYKINASE (ATP)"/>
    <property type="match status" value="1"/>
</dbReference>
<dbReference type="PANTHER" id="PTHR30031">
    <property type="entry name" value="PHOSPHOENOLPYRUVATE CARBOXYKINASE ATP"/>
    <property type="match status" value="1"/>
</dbReference>
<dbReference type="Pfam" id="PF01293">
    <property type="entry name" value="PEPCK_ATP"/>
    <property type="match status" value="1"/>
</dbReference>
<dbReference type="PIRSF" id="PIRSF006294">
    <property type="entry name" value="PEP_crbxkin"/>
    <property type="match status" value="1"/>
</dbReference>
<dbReference type="SUPFAM" id="SSF68923">
    <property type="entry name" value="PEP carboxykinase N-terminal domain"/>
    <property type="match status" value="1"/>
</dbReference>
<dbReference type="SUPFAM" id="SSF53795">
    <property type="entry name" value="PEP carboxykinase-like"/>
    <property type="match status" value="1"/>
</dbReference>
<dbReference type="PROSITE" id="PS00532">
    <property type="entry name" value="PEPCK_ATP"/>
    <property type="match status" value="1"/>
</dbReference>
<name>PCKA_CANGA</name>
<accession>Q6FRR0</accession>
<comment type="catalytic activity">
    <reaction>
        <text>oxaloacetate + ATP = phosphoenolpyruvate + ADP + CO2</text>
        <dbReference type="Rhea" id="RHEA:18617"/>
        <dbReference type="ChEBI" id="CHEBI:16452"/>
        <dbReference type="ChEBI" id="CHEBI:16526"/>
        <dbReference type="ChEBI" id="CHEBI:30616"/>
        <dbReference type="ChEBI" id="CHEBI:58702"/>
        <dbReference type="ChEBI" id="CHEBI:456216"/>
        <dbReference type="EC" id="4.1.1.49"/>
    </reaction>
</comment>
<comment type="pathway">
    <text>Carbohydrate biosynthesis; gluconeogenesis.</text>
</comment>
<comment type="similarity">
    <text evidence="2">Belongs to the phosphoenolpyruvate carboxykinase (ATP) family.</text>
</comment>
<protein>
    <recommendedName>
        <fullName>Phosphoenolpyruvate carboxykinase (ATP)</fullName>
        <ecNumber>4.1.1.49</ecNumber>
    </recommendedName>
</protein>
<sequence>MPSKSSVSGNSVEERIRSELGLSKEVTLIRRNAPAAVLYQDALKEKKTVISSAGALIAYSGEKTGRSPKDKRIVEEETSRDNVWWGPVNKPCSERTWAINRERAADYLRTRETLYVVDAFAGWDPKYRIKVRVVCARAYHALFMTNMLIRPTEEELANFGEPDFTVWNAGQFPANARTQDMTSKTTIEINFKAMEMVILGTEYAGEMKKGIFTVMFYLMPVHHNVLTLHSSCNQGIKNGDVTLFFGLSGTGKTTLSADPHRLLIGDDEHCWSDEGVFNIEGGCYAKCINLSREKEPEIFDAIRFGSVLENVIYDSESHEVDYDDSSITENTRCAYPIDFIPSAKIPCLAPAHPKNIILLTCDASGVLPPVSKLTPEQVMYHFISGYTSKMAGTEQGVTEPEPTFSSCFGQPFLSLHPMRYATMLAEKMHEHSANAWLINTGWTGSSYVSGGKRCALKYTRAILDAIHDGSLAKAEFESLPIFNLQVPKAVEGVPSELLNPARNWSEGEAKYQSAVSKLAGLFVENFKTYQDKATSDVLAAGPQL</sequence>
<keyword id="KW-0067">ATP-binding</keyword>
<keyword id="KW-0210">Decarboxylase</keyword>
<keyword id="KW-0312">Gluconeogenesis</keyword>
<keyword id="KW-0456">Lyase</keyword>
<keyword id="KW-0547">Nucleotide-binding</keyword>
<keyword id="KW-1185">Reference proteome</keyword>
<organism>
    <name type="scientific">Candida glabrata (strain ATCC 2001 / BCRC 20586 / JCM 3761 / NBRC 0622 / NRRL Y-65 / CBS 138)</name>
    <name type="common">Yeast</name>
    <name type="synonym">Nakaseomyces glabratus</name>
    <dbReference type="NCBI Taxonomy" id="284593"/>
    <lineage>
        <taxon>Eukaryota</taxon>
        <taxon>Fungi</taxon>
        <taxon>Dikarya</taxon>
        <taxon>Ascomycota</taxon>
        <taxon>Saccharomycotina</taxon>
        <taxon>Saccharomycetes</taxon>
        <taxon>Saccharomycetales</taxon>
        <taxon>Saccharomycetaceae</taxon>
        <taxon>Nakaseomyces</taxon>
    </lineage>
</organism>
<proteinExistence type="inferred from homology"/>
<gene>
    <name type="primary">PCK1</name>
    <name type="ordered locus">CAGL0H06633g</name>
</gene>